<organism>
    <name type="scientific">Coxiella burnetii (strain RSA 331 / Henzerling II)</name>
    <dbReference type="NCBI Taxonomy" id="360115"/>
    <lineage>
        <taxon>Bacteria</taxon>
        <taxon>Pseudomonadati</taxon>
        <taxon>Pseudomonadota</taxon>
        <taxon>Gammaproteobacteria</taxon>
        <taxon>Legionellales</taxon>
        <taxon>Coxiellaceae</taxon>
        <taxon>Coxiella</taxon>
    </lineage>
</organism>
<reference key="1">
    <citation type="submission" date="2007-11" db="EMBL/GenBank/DDBJ databases">
        <title>Genome sequencing of phylogenetically and phenotypically diverse Coxiella burnetii isolates.</title>
        <authorList>
            <person name="Seshadri R."/>
            <person name="Samuel J.E."/>
        </authorList>
    </citation>
    <scope>NUCLEOTIDE SEQUENCE [LARGE SCALE GENOMIC DNA]</scope>
    <source>
        <strain>RSA 331 / Henzerling II</strain>
    </source>
</reference>
<dbReference type="EMBL" id="CP000890">
    <property type="protein sequence ID" value="ABX78240.1"/>
    <property type="molecule type" value="Genomic_DNA"/>
</dbReference>
<dbReference type="RefSeq" id="WP_005769774.1">
    <property type="nucleotide sequence ID" value="NC_010117.1"/>
</dbReference>
<dbReference type="SMR" id="A9N9F8"/>
<dbReference type="KEGG" id="cbs:COXBURSA331_A0072"/>
<dbReference type="HOGENOM" id="CLU_033123_0_0_6"/>
<dbReference type="GO" id="GO:0009376">
    <property type="term" value="C:HslUV protease complex"/>
    <property type="evidence" value="ECO:0007669"/>
    <property type="project" value="UniProtKB-UniRule"/>
</dbReference>
<dbReference type="GO" id="GO:0005524">
    <property type="term" value="F:ATP binding"/>
    <property type="evidence" value="ECO:0007669"/>
    <property type="project" value="UniProtKB-UniRule"/>
</dbReference>
<dbReference type="GO" id="GO:0016887">
    <property type="term" value="F:ATP hydrolysis activity"/>
    <property type="evidence" value="ECO:0007669"/>
    <property type="project" value="InterPro"/>
</dbReference>
<dbReference type="GO" id="GO:0008233">
    <property type="term" value="F:peptidase activity"/>
    <property type="evidence" value="ECO:0007669"/>
    <property type="project" value="InterPro"/>
</dbReference>
<dbReference type="GO" id="GO:0036402">
    <property type="term" value="F:proteasome-activating activity"/>
    <property type="evidence" value="ECO:0007669"/>
    <property type="project" value="UniProtKB-UniRule"/>
</dbReference>
<dbReference type="GO" id="GO:0043335">
    <property type="term" value="P:protein unfolding"/>
    <property type="evidence" value="ECO:0007669"/>
    <property type="project" value="UniProtKB-UniRule"/>
</dbReference>
<dbReference type="GO" id="GO:0051603">
    <property type="term" value="P:proteolysis involved in protein catabolic process"/>
    <property type="evidence" value="ECO:0007669"/>
    <property type="project" value="TreeGrafter"/>
</dbReference>
<dbReference type="CDD" id="cd19498">
    <property type="entry name" value="RecA-like_HslU"/>
    <property type="match status" value="1"/>
</dbReference>
<dbReference type="FunFam" id="1.10.8.10:FF:000028">
    <property type="entry name" value="ATP-dependent protease ATPase subunit HslU"/>
    <property type="match status" value="1"/>
</dbReference>
<dbReference type="FunFam" id="3.40.50.300:FF:000213">
    <property type="entry name" value="ATP-dependent protease ATPase subunit HslU"/>
    <property type="match status" value="1"/>
</dbReference>
<dbReference type="FunFam" id="3.40.50.300:FF:000220">
    <property type="entry name" value="ATP-dependent protease ATPase subunit HslU"/>
    <property type="match status" value="1"/>
</dbReference>
<dbReference type="Gene3D" id="1.10.8.60">
    <property type="match status" value="1"/>
</dbReference>
<dbReference type="Gene3D" id="3.40.50.300">
    <property type="entry name" value="P-loop containing nucleotide triphosphate hydrolases"/>
    <property type="match status" value="2"/>
</dbReference>
<dbReference type="HAMAP" id="MF_00249">
    <property type="entry name" value="HslU"/>
    <property type="match status" value="1"/>
</dbReference>
<dbReference type="InterPro" id="IPR003593">
    <property type="entry name" value="AAA+_ATPase"/>
</dbReference>
<dbReference type="InterPro" id="IPR050052">
    <property type="entry name" value="ATP-dep_Clp_protease_ClpX"/>
</dbReference>
<dbReference type="InterPro" id="IPR003959">
    <property type="entry name" value="ATPase_AAA_core"/>
</dbReference>
<dbReference type="InterPro" id="IPR019489">
    <property type="entry name" value="Clp_ATPase_C"/>
</dbReference>
<dbReference type="InterPro" id="IPR004491">
    <property type="entry name" value="HslU"/>
</dbReference>
<dbReference type="InterPro" id="IPR027417">
    <property type="entry name" value="P-loop_NTPase"/>
</dbReference>
<dbReference type="NCBIfam" id="TIGR00390">
    <property type="entry name" value="hslU"/>
    <property type="match status" value="1"/>
</dbReference>
<dbReference type="NCBIfam" id="NF003544">
    <property type="entry name" value="PRK05201.1"/>
    <property type="match status" value="1"/>
</dbReference>
<dbReference type="PANTHER" id="PTHR48102">
    <property type="entry name" value="ATP-DEPENDENT CLP PROTEASE ATP-BINDING SUBUNIT CLPX-LIKE, MITOCHONDRIAL-RELATED"/>
    <property type="match status" value="1"/>
</dbReference>
<dbReference type="PANTHER" id="PTHR48102:SF3">
    <property type="entry name" value="ATP-DEPENDENT PROTEASE ATPASE SUBUNIT HSLU"/>
    <property type="match status" value="1"/>
</dbReference>
<dbReference type="Pfam" id="PF00004">
    <property type="entry name" value="AAA"/>
    <property type="match status" value="1"/>
</dbReference>
<dbReference type="Pfam" id="PF07724">
    <property type="entry name" value="AAA_2"/>
    <property type="match status" value="1"/>
</dbReference>
<dbReference type="SMART" id="SM00382">
    <property type="entry name" value="AAA"/>
    <property type="match status" value="1"/>
</dbReference>
<dbReference type="SMART" id="SM01086">
    <property type="entry name" value="ClpB_D2-small"/>
    <property type="match status" value="1"/>
</dbReference>
<dbReference type="SUPFAM" id="SSF52540">
    <property type="entry name" value="P-loop containing nucleoside triphosphate hydrolases"/>
    <property type="match status" value="1"/>
</dbReference>
<keyword id="KW-0067">ATP-binding</keyword>
<keyword id="KW-0143">Chaperone</keyword>
<keyword id="KW-0963">Cytoplasm</keyword>
<keyword id="KW-0547">Nucleotide-binding</keyword>
<keyword id="KW-0346">Stress response</keyword>
<evidence type="ECO:0000255" key="1">
    <source>
        <dbReference type="HAMAP-Rule" id="MF_00249"/>
    </source>
</evidence>
<evidence type="ECO:0000256" key="2">
    <source>
        <dbReference type="SAM" id="MobiDB-lite"/>
    </source>
</evidence>
<feature type="chain" id="PRO_1000078443" description="ATP-dependent protease ATPase subunit HslU">
    <location>
        <begin position="1"/>
        <end position="447"/>
    </location>
</feature>
<feature type="region of interest" description="Disordered" evidence="2">
    <location>
        <begin position="136"/>
        <end position="160"/>
    </location>
</feature>
<feature type="compositionally biased region" description="Basic and acidic residues" evidence="2">
    <location>
        <begin position="148"/>
        <end position="159"/>
    </location>
</feature>
<feature type="binding site" evidence="1">
    <location>
        <position position="17"/>
    </location>
    <ligand>
        <name>ATP</name>
        <dbReference type="ChEBI" id="CHEBI:30616"/>
    </ligand>
</feature>
<feature type="binding site" evidence="1">
    <location>
        <begin position="59"/>
        <end position="64"/>
    </location>
    <ligand>
        <name>ATP</name>
        <dbReference type="ChEBI" id="CHEBI:30616"/>
    </ligand>
</feature>
<feature type="binding site" evidence="1">
    <location>
        <position position="260"/>
    </location>
    <ligand>
        <name>ATP</name>
        <dbReference type="ChEBI" id="CHEBI:30616"/>
    </ligand>
</feature>
<feature type="binding site" evidence="1">
    <location>
        <position position="325"/>
    </location>
    <ligand>
        <name>ATP</name>
        <dbReference type="ChEBI" id="CHEBI:30616"/>
    </ligand>
</feature>
<feature type="binding site" evidence="1">
    <location>
        <position position="397"/>
    </location>
    <ligand>
        <name>ATP</name>
        <dbReference type="ChEBI" id="CHEBI:30616"/>
    </ligand>
</feature>
<protein>
    <recommendedName>
        <fullName evidence="1">ATP-dependent protease ATPase subunit HslU</fullName>
    </recommendedName>
    <alternativeName>
        <fullName evidence="1">Unfoldase HslU</fullName>
    </alternativeName>
</protein>
<gene>
    <name evidence="1" type="primary">hslU</name>
    <name type="ordered locus">COXBURSA331_A0072</name>
</gene>
<proteinExistence type="inferred from homology"/>
<comment type="function">
    <text evidence="1">ATPase subunit of a proteasome-like degradation complex; this subunit has chaperone activity. The binding of ATP and its subsequent hydrolysis by HslU are essential for unfolding of protein substrates subsequently hydrolyzed by HslV. HslU recognizes the N-terminal part of its protein substrates and unfolds these before they are guided to HslV for hydrolysis.</text>
</comment>
<comment type="subunit">
    <text evidence="1">A double ring-shaped homohexamer of HslV is capped on each side by a ring-shaped HslU homohexamer. The assembly of the HslU/HslV complex is dependent on binding of ATP.</text>
</comment>
<comment type="subcellular location">
    <subcellularLocation>
        <location evidence="1">Cytoplasm</location>
    </subcellularLocation>
</comment>
<comment type="similarity">
    <text evidence="1">Belongs to the ClpX chaperone family. HslU subfamily.</text>
</comment>
<sequence length="447" mass="50182">MTMTPREIVAELDKFIIGQNDAKRAVAIALRNRWRRMQLGEELRREIFPKNILMIGPTGVGKTEIARRLSDLAGAPFLKIEATKFTEVGYVGRDVESIIRDLVDVAVKMTREKAIRQVKSLAEEAAEERVLDALIPPARGGFQGEPTAEEKPTEKKESATRQLFRKKLRNGELDDKEIEVEVSAHPSFEIMGPPGMEEMVSQLQGIMSSMSSRRSKSRRLKVKDALRILGEEEAAKLVDEDQIKSTALASVEQNGIVFIDEIDKIVKREGAVGADVSREGVQRDLLPLVEGSTVFTKYGMVKTDHILFIASGAFHIAKPSDLVPELQGRFPIRVELKALTADDFVRILTEPKASLTEQYTELLKTENFGLSFTKDGIKRLAEIAYQVNDRSENIGARRLHTIMERLLEEVSFEATDKQGESITIDADYVNKQLKKLAEDEDLSRYIL</sequence>
<accession>A9N9F8</accession>
<name>HSLU_COXBR</name>